<keyword id="KW-0963">Cytoplasm</keyword>
<keyword id="KW-0324">Glycolysis</keyword>
<keyword id="KW-0456">Lyase</keyword>
<keyword id="KW-0460">Magnesium</keyword>
<keyword id="KW-0479">Metal-binding</keyword>
<keyword id="KW-1185">Reference proteome</keyword>
<keyword id="KW-0964">Secreted</keyword>
<organism>
    <name type="scientific">Shewanella oneidensis (strain ATCC 700550 / JCM 31522 / CIP 106686 / LMG 19005 / NCIMB 14063 / MR-1)</name>
    <dbReference type="NCBI Taxonomy" id="211586"/>
    <lineage>
        <taxon>Bacteria</taxon>
        <taxon>Pseudomonadati</taxon>
        <taxon>Pseudomonadota</taxon>
        <taxon>Gammaproteobacteria</taxon>
        <taxon>Alteromonadales</taxon>
        <taxon>Shewanellaceae</taxon>
        <taxon>Shewanella</taxon>
    </lineage>
</organism>
<proteinExistence type="inferred from homology"/>
<dbReference type="EC" id="4.2.1.11" evidence="1"/>
<dbReference type="EMBL" id="AE014299">
    <property type="protein sequence ID" value="AAN56437.2"/>
    <property type="molecule type" value="Genomic_DNA"/>
</dbReference>
<dbReference type="RefSeq" id="NP_718993.2">
    <property type="nucleotide sequence ID" value="NC_004347.2"/>
</dbReference>
<dbReference type="RefSeq" id="WP_011073296.1">
    <property type="nucleotide sequence ID" value="NC_004347.2"/>
</dbReference>
<dbReference type="SMR" id="Q8EBR0"/>
<dbReference type="STRING" id="211586.SO_3440"/>
<dbReference type="PaxDb" id="211586-SO_3440"/>
<dbReference type="KEGG" id="son:SO_3440"/>
<dbReference type="PATRIC" id="fig|211586.12.peg.3335"/>
<dbReference type="eggNOG" id="COG0148">
    <property type="taxonomic scope" value="Bacteria"/>
</dbReference>
<dbReference type="HOGENOM" id="CLU_031223_2_1_6"/>
<dbReference type="OrthoDB" id="9804716at2"/>
<dbReference type="PhylomeDB" id="Q8EBR0"/>
<dbReference type="BioCyc" id="SONE211586:G1GMP-3211-MONOMER"/>
<dbReference type="UniPathway" id="UPA00109">
    <property type="reaction ID" value="UER00187"/>
</dbReference>
<dbReference type="Proteomes" id="UP000008186">
    <property type="component" value="Chromosome"/>
</dbReference>
<dbReference type="GO" id="GO:0009986">
    <property type="term" value="C:cell surface"/>
    <property type="evidence" value="ECO:0007669"/>
    <property type="project" value="UniProtKB-SubCell"/>
</dbReference>
<dbReference type="GO" id="GO:0005576">
    <property type="term" value="C:extracellular region"/>
    <property type="evidence" value="ECO:0007669"/>
    <property type="project" value="UniProtKB-SubCell"/>
</dbReference>
<dbReference type="GO" id="GO:0000015">
    <property type="term" value="C:phosphopyruvate hydratase complex"/>
    <property type="evidence" value="ECO:0000318"/>
    <property type="project" value="GO_Central"/>
</dbReference>
<dbReference type="GO" id="GO:0000287">
    <property type="term" value="F:magnesium ion binding"/>
    <property type="evidence" value="ECO:0007669"/>
    <property type="project" value="UniProtKB-UniRule"/>
</dbReference>
<dbReference type="GO" id="GO:0004634">
    <property type="term" value="F:phosphopyruvate hydratase activity"/>
    <property type="evidence" value="ECO:0000318"/>
    <property type="project" value="GO_Central"/>
</dbReference>
<dbReference type="GO" id="GO:0006096">
    <property type="term" value="P:glycolytic process"/>
    <property type="evidence" value="ECO:0000318"/>
    <property type="project" value="GO_Central"/>
</dbReference>
<dbReference type="CDD" id="cd03313">
    <property type="entry name" value="enolase"/>
    <property type="match status" value="1"/>
</dbReference>
<dbReference type="FunFam" id="3.20.20.120:FF:000001">
    <property type="entry name" value="Enolase"/>
    <property type="match status" value="1"/>
</dbReference>
<dbReference type="FunFam" id="3.30.390.10:FF:000001">
    <property type="entry name" value="Enolase"/>
    <property type="match status" value="1"/>
</dbReference>
<dbReference type="Gene3D" id="3.20.20.120">
    <property type="entry name" value="Enolase-like C-terminal domain"/>
    <property type="match status" value="1"/>
</dbReference>
<dbReference type="Gene3D" id="3.30.390.10">
    <property type="entry name" value="Enolase-like, N-terminal domain"/>
    <property type="match status" value="1"/>
</dbReference>
<dbReference type="HAMAP" id="MF_00318">
    <property type="entry name" value="Enolase"/>
    <property type="match status" value="1"/>
</dbReference>
<dbReference type="InterPro" id="IPR000941">
    <property type="entry name" value="Enolase"/>
</dbReference>
<dbReference type="InterPro" id="IPR036849">
    <property type="entry name" value="Enolase-like_C_sf"/>
</dbReference>
<dbReference type="InterPro" id="IPR029017">
    <property type="entry name" value="Enolase-like_N"/>
</dbReference>
<dbReference type="InterPro" id="IPR020810">
    <property type="entry name" value="Enolase_C"/>
</dbReference>
<dbReference type="InterPro" id="IPR020809">
    <property type="entry name" value="Enolase_CS"/>
</dbReference>
<dbReference type="InterPro" id="IPR020811">
    <property type="entry name" value="Enolase_N"/>
</dbReference>
<dbReference type="NCBIfam" id="TIGR01060">
    <property type="entry name" value="eno"/>
    <property type="match status" value="1"/>
</dbReference>
<dbReference type="PANTHER" id="PTHR11902">
    <property type="entry name" value="ENOLASE"/>
    <property type="match status" value="1"/>
</dbReference>
<dbReference type="PANTHER" id="PTHR11902:SF1">
    <property type="entry name" value="ENOLASE"/>
    <property type="match status" value="1"/>
</dbReference>
<dbReference type="Pfam" id="PF00113">
    <property type="entry name" value="Enolase_C"/>
    <property type="match status" value="1"/>
</dbReference>
<dbReference type="Pfam" id="PF03952">
    <property type="entry name" value="Enolase_N"/>
    <property type="match status" value="1"/>
</dbReference>
<dbReference type="PIRSF" id="PIRSF001400">
    <property type="entry name" value="Enolase"/>
    <property type="match status" value="1"/>
</dbReference>
<dbReference type="PRINTS" id="PR00148">
    <property type="entry name" value="ENOLASE"/>
</dbReference>
<dbReference type="SFLD" id="SFLDS00001">
    <property type="entry name" value="Enolase"/>
    <property type="match status" value="1"/>
</dbReference>
<dbReference type="SFLD" id="SFLDF00002">
    <property type="entry name" value="enolase"/>
    <property type="match status" value="1"/>
</dbReference>
<dbReference type="SMART" id="SM01192">
    <property type="entry name" value="Enolase_C"/>
    <property type="match status" value="1"/>
</dbReference>
<dbReference type="SMART" id="SM01193">
    <property type="entry name" value="Enolase_N"/>
    <property type="match status" value="1"/>
</dbReference>
<dbReference type="SUPFAM" id="SSF51604">
    <property type="entry name" value="Enolase C-terminal domain-like"/>
    <property type="match status" value="1"/>
</dbReference>
<dbReference type="SUPFAM" id="SSF54826">
    <property type="entry name" value="Enolase N-terminal domain-like"/>
    <property type="match status" value="1"/>
</dbReference>
<dbReference type="PROSITE" id="PS00164">
    <property type="entry name" value="ENOLASE"/>
    <property type="match status" value="1"/>
</dbReference>
<protein>
    <recommendedName>
        <fullName evidence="1">Enolase</fullName>
        <ecNumber evidence="1">4.2.1.11</ecNumber>
    </recommendedName>
    <alternativeName>
        <fullName evidence="1">2-phospho-D-glycerate hydro-lyase</fullName>
    </alternativeName>
    <alternativeName>
        <fullName evidence="1">2-phosphoglycerate dehydratase</fullName>
    </alternativeName>
</protein>
<name>ENO_SHEON</name>
<evidence type="ECO:0000255" key="1">
    <source>
        <dbReference type="HAMAP-Rule" id="MF_00318"/>
    </source>
</evidence>
<reference key="1">
    <citation type="journal article" date="2002" name="Nat. Biotechnol.">
        <title>Genome sequence of the dissimilatory metal ion-reducing bacterium Shewanella oneidensis.</title>
        <authorList>
            <person name="Heidelberg J.F."/>
            <person name="Paulsen I.T."/>
            <person name="Nelson K.E."/>
            <person name="Gaidos E.J."/>
            <person name="Nelson W.C."/>
            <person name="Read T.D."/>
            <person name="Eisen J.A."/>
            <person name="Seshadri R."/>
            <person name="Ward N.L."/>
            <person name="Methe B.A."/>
            <person name="Clayton R.A."/>
            <person name="Meyer T."/>
            <person name="Tsapin A."/>
            <person name="Scott J."/>
            <person name="Beanan M.J."/>
            <person name="Brinkac L.M."/>
            <person name="Daugherty S.C."/>
            <person name="DeBoy R.T."/>
            <person name="Dodson R.J."/>
            <person name="Durkin A.S."/>
            <person name="Haft D.H."/>
            <person name="Kolonay J.F."/>
            <person name="Madupu R."/>
            <person name="Peterson J.D."/>
            <person name="Umayam L.A."/>
            <person name="White O."/>
            <person name="Wolf A.M."/>
            <person name="Vamathevan J.J."/>
            <person name="Weidman J.F."/>
            <person name="Impraim M."/>
            <person name="Lee K."/>
            <person name="Berry K.J."/>
            <person name="Lee C."/>
            <person name="Mueller J."/>
            <person name="Khouri H.M."/>
            <person name="Gill J."/>
            <person name="Utterback T.R."/>
            <person name="McDonald L.A."/>
            <person name="Feldblyum T.V."/>
            <person name="Smith H.O."/>
            <person name="Venter J.C."/>
            <person name="Nealson K.H."/>
            <person name="Fraser C.M."/>
        </authorList>
    </citation>
    <scope>NUCLEOTIDE SEQUENCE [LARGE SCALE GENOMIC DNA]</scope>
    <source>
        <strain>ATCC 700550 / JCM 31522 / CIP 106686 / LMG 19005 / NCIMB 14063 / MR-1</strain>
    </source>
</reference>
<feature type="chain" id="PRO_0000133961" description="Enolase">
    <location>
        <begin position="1"/>
        <end position="431"/>
    </location>
</feature>
<feature type="active site" description="Proton donor" evidence="1">
    <location>
        <position position="209"/>
    </location>
</feature>
<feature type="active site" description="Proton acceptor" evidence="1">
    <location>
        <position position="341"/>
    </location>
</feature>
<feature type="binding site" evidence="1">
    <location>
        <position position="167"/>
    </location>
    <ligand>
        <name>(2R)-2-phosphoglycerate</name>
        <dbReference type="ChEBI" id="CHEBI:58289"/>
    </ligand>
</feature>
<feature type="binding site" evidence="1">
    <location>
        <position position="246"/>
    </location>
    <ligand>
        <name>Mg(2+)</name>
        <dbReference type="ChEBI" id="CHEBI:18420"/>
    </ligand>
</feature>
<feature type="binding site" evidence="1">
    <location>
        <position position="289"/>
    </location>
    <ligand>
        <name>Mg(2+)</name>
        <dbReference type="ChEBI" id="CHEBI:18420"/>
    </ligand>
</feature>
<feature type="binding site" evidence="1">
    <location>
        <position position="316"/>
    </location>
    <ligand>
        <name>Mg(2+)</name>
        <dbReference type="ChEBI" id="CHEBI:18420"/>
    </ligand>
</feature>
<feature type="binding site" evidence="1">
    <location>
        <position position="341"/>
    </location>
    <ligand>
        <name>(2R)-2-phosphoglycerate</name>
        <dbReference type="ChEBI" id="CHEBI:58289"/>
    </ligand>
</feature>
<feature type="binding site" evidence="1">
    <location>
        <position position="370"/>
    </location>
    <ligand>
        <name>(2R)-2-phosphoglycerate</name>
        <dbReference type="ChEBI" id="CHEBI:58289"/>
    </ligand>
</feature>
<feature type="binding site" evidence="1">
    <location>
        <position position="371"/>
    </location>
    <ligand>
        <name>(2R)-2-phosphoglycerate</name>
        <dbReference type="ChEBI" id="CHEBI:58289"/>
    </ligand>
</feature>
<feature type="binding site" evidence="1">
    <location>
        <position position="392"/>
    </location>
    <ligand>
        <name>(2R)-2-phosphoglycerate</name>
        <dbReference type="ChEBI" id="CHEBI:58289"/>
    </ligand>
</feature>
<comment type="function">
    <text evidence="1">Catalyzes the reversible conversion of 2-phosphoglycerate (2-PG) into phosphoenolpyruvate (PEP). It is essential for the degradation of carbohydrates via glycolysis.</text>
</comment>
<comment type="catalytic activity">
    <reaction evidence="1">
        <text>(2R)-2-phosphoglycerate = phosphoenolpyruvate + H2O</text>
        <dbReference type="Rhea" id="RHEA:10164"/>
        <dbReference type="ChEBI" id="CHEBI:15377"/>
        <dbReference type="ChEBI" id="CHEBI:58289"/>
        <dbReference type="ChEBI" id="CHEBI:58702"/>
        <dbReference type="EC" id="4.2.1.11"/>
    </reaction>
</comment>
<comment type="cofactor">
    <cofactor evidence="1">
        <name>Mg(2+)</name>
        <dbReference type="ChEBI" id="CHEBI:18420"/>
    </cofactor>
    <text evidence="1">Binds a second Mg(2+) ion via substrate during catalysis.</text>
</comment>
<comment type="pathway">
    <text evidence="1">Carbohydrate degradation; glycolysis; pyruvate from D-glyceraldehyde 3-phosphate: step 4/5.</text>
</comment>
<comment type="subunit">
    <text evidence="1">Component of the RNA degradosome, a multiprotein complex involved in RNA processing and mRNA degradation.</text>
</comment>
<comment type="subcellular location">
    <subcellularLocation>
        <location evidence="1">Cytoplasm</location>
    </subcellularLocation>
    <subcellularLocation>
        <location evidence="1">Secreted</location>
    </subcellularLocation>
    <subcellularLocation>
        <location evidence="1">Cell surface</location>
    </subcellularLocation>
    <text evidence="1">Fractions of enolase are present in both the cytoplasm and on the cell surface.</text>
</comment>
<comment type="similarity">
    <text evidence="1">Belongs to the enolase family.</text>
</comment>
<accession>Q8EBR0</accession>
<sequence length="431" mass="45687">MAKIINVIGREIMDSRGNPTVEAEVHLEGGFIGMAAAPSGASTGSREALELRDGDKSRYLGKGVLTAVANVNGPIRTALIGKDATAQAELDQIMIDLDGTENKDKLGANAILAVSLAAAKAAAAFKGMPLYAHIAELNGTPGQYAMPVPMMNILNGGEHADNNVDIQEFMVQPVGAKNFREALRMGAEIFHTLKKVLHGKGLSTSVGDEGGFAPNLSSNADALAVIKEAVELAGYKLGTDVTLALDCAASEFYKDGKYDLAGEGKVFDSNGFSDFLKSLTEQYPIVSIEDGLDESDWDGWAYQTQIMGDKIQLVGDDLFVTNTKILTRGIENGIANSILIKFNQIGSLTETLAAIRMAKAAGYTAVISHRSGETEDATIADLAVGTAAGQIKTGSLCRSDRVAKYNQLLRIEEQLGEKAPYRGLKEIKGQA</sequence>
<gene>
    <name evidence="1" type="primary">eno</name>
    <name type="ordered locus">SO_3440</name>
</gene>